<sequence length="292" mass="30987">MATLHFTKGQGTGNDFVLYADPDGTLPLSAGQIAEICDRHFGVGADGVIRAVRSKRLPEGAEALADDEAAEWFMDYYNADGSAAEMCGNGIRVYVRYLIESRLVQLADGDTLPIGTRSGVRDVQRTLSGFQVDLGRWRLAGGEPLVRAKELPVARLGLGIDLGNPHVVVALADESELESADLTYIPHLEPAPQGGANVEFVVPHEPLVKDGVGRIRMRVHERGSGETLSCGTGAAAAALAVRHWAGENAPGQWWVDVPGGTVGVRMFPTEDGEHVALSGPAELVYTGALELA</sequence>
<evidence type="ECO:0000255" key="1">
    <source>
        <dbReference type="HAMAP-Rule" id="MF_00197"/>
    </source>
</evidence>
<protein>
    <recommendedName>
        <fullName evidence="1">Diaminopimelate epimerase</fullName>
        <shortName evidence="1">DAP epimerase</shortName>
        <ecNumber evidence="1">5.1.1.7</ecNumber>
    </recommendedName>
    <alternativeName>
        <fullName evidence="1">PLP-independent amino acid racemase</fullName>
    </alternativeName>
</protein>
<name>DAPF_LEIXX</name>
<organism>
    <name type="scientific">Leifsonia xyli subsp. xyli (strain CTCB07)</name>
    <dbReference type="NCBI Taxonomy" id="281090"/>
    <lineage>
        <taxon>Bacteria</taxon>
        <taxon>Bacillati</taxon>
        <taxon>Actinomycetota</taxon>
        <taxon>Actinomycetes</taxon>
        <taxon>Micrococcales</taxon>
        <taxon>Microbacteriaceae</taxon>
        <taxon>Leifsonia</taxon>
    </lineage>
</organism>
<keyword id="KW-0028">Amino-acid biosynthesis</keyword>
<keyword id="KW-0963">Cytoplasm</keyword>
<keyword id="KW-0413">Isomerase</keyword>
<keyword id="KW-0457">Lysine biosynthesis</keyword>
<keyword id="KW-1185">Reference proteome</keyword>
<gene>
    <name evidence="1" type="primary">dapF</name>
    <name type="ordered locus">Lxx15970</name>
</gene>
<proteinExistence type="inferred from homology"/>
<feature type="chain" id="PRO_0000149846" description="Diaminopimelate epimerase">
    <location>
        <begin position="1"/>
        <end position="292"/>
    </location>
</feature>
<feature type="active site" description="Proton donor" evidence="1">
    <location>
        <position position="87"/>
    </location>
</feature>
<feature type="active site" description="Proton acceptor" evidence="1">
    <location>
        <position position="230"/>
    </location>
</feature>
<feature type="binding site" evidence="1">
    <location>
        <position position="14"/>
    </location>
    <ligand>
        <name>substrate</name>
    </ligand>
</feature>
<feature type="binding site" evidence="1">
    <location>
        <position position="78"/>
    </location>
    <ligand>
        <name>substrate</name>
    </ligand>
</feature>
<feature type="binding site" evidence="1">
    <location>
        <begin position="88"/>
        <end position="89"/>
    </location>
    <ligand>
        <name>substrate</name>
    </ligand>
</feature>
<feature type="binding site" evidence="1">
    <location>
        <position position="164"/>
    </location>
    <ligand>
        <name>substrate</name>
    </ligand>
</feature>
<feature type="binding site" evidence="1">
    <location>
        <position position="197"/>
    </location>
    <ligand>
        <name>substrate</name>
    </ligand>
</feature>
<feature type="binding site" evidence="1">
    <location>
        <begin position="221"/>
        <end position="222"/>
    </location>
    <ligand>
        <name>substrate</name>
    </ligand>
</feature>
<feature type="binding site" evidence="1">
    <location>
        <begin position="231"/>
        <end position="232"/>
    </location>
    <ligand>
        <name>substrate</name>
    </ligand>
</feature>
<feature type="site" description="Could be important to modulate the pK values of the two catalytic cysteine residues" evidence="1">
    <location>
        <position position="166"/>
    </location>
</feature>
<feature type="site" description="Could be important to modulate the pK values of the two catalytic cysteine residues" evidence="1">
    <location>
        <position position="221"/>
    </location>
</feature>
<comment type="function">
    <text evidence="1">Catalyzes the stereoinversion of LL-2,6-diaminopimelate (L,L-DAP) to meso-diaminopimelate (meso-DAP), a precursor of L-lysine and an essential component of the bacterial peptidoglycan.</text>
</comment>
<comment type="catalytic activity">
    <reaction evidence="1">
        <text>(2S,6S)-2,6-diaminopimelate = meso-2,6-diaminopimelate</text>
        <dbReference type="Rhea" id="RHEA:15393"/>
        <dbReference type="ChEBI" id="CHEBI:57609"/>
        <dbReference type="ChEBI" id="CHEBI:57791"/>
        <dbReference type="EC" id="5.1.1.7"/>
    </reaction>
</comment>
<comment type="pathway">
    <text evidence="1">Amino-acid biosynthesis; L-lysine biosynthesis via DAP pathway; DL-2,6-diaminopimelate from LL-2,6-diaminopimelate: step 1/1.</text>
</comment>
<comment type="subunit">
    <text evidence="1">Homodimer.</text>
</comment>
<comment type="subcellular location">
    <subcellularLocation>
        <location evidence="1">Cytoplasm</location>
    </subcellularLocation>
</comment>
<comment type="similarity">
    <text evidence="1">Belongs to the diaminopimelate epimerase family.</text>
</comment>
<dbReference type="EC" id="5.1.1.7" evidence="1"/>
<dbReference type="EMBL" id="AE016822">
    <property type="protein sequence ID" value="AAT89391.1"/>
    <property type="molecule type" value="Genomic_DNA"/>
</dbReference>
<dbReference type="RefSeq" id="WP_011186380.1">
    <property type="nucleotide sequence ID" value="NC_006087.1"/>
</dbReference>
<dbReference type="SMR" id="Q6AE05"/>
<dbReference type="STRING" id="281090.Lxx15970"/>
<dbReference type="KEGG" id="lxx:Lxx15970"/>
<dbReference type="eggNOG" id="COG0253">
    <property type="taxonomic scope" value="Bacteria"/>
</dbReference>
<dbReference type="HOGENOM" id="CLU_053306_4_0_11"/>
<dbReference type="UniPathway" id="UPA00034">
    <property type="reaction ID" value="UER00025"/>
</dbReference>
<dbReference type="Proteomes" id="UP000001306">
    <property type="component" value="Chromosome"/>
</dbReference>
<dbReference type="GO" id="GO:0005829">
    <property type="term" value="C:cytosol"/>
    <property type="evidence" value="ECO:0007669"/>
    <property type="project" value="TreeGrafter"/>
</dbReference>
<dbReference type="GO" id="GO:0008837">
    <property type="term" value="F:diaminopimelate epimerase activity"/>
    <property type="evidence" value="ECO:0007669"/>
    <property type="project" value="UniProtKB-UniRule"/>
</dbReference>
<dbReference type="GO" id="GO:0009089">
    <property type="term" value="P:lysine biosynthetic process via diaminopimelate"/>
    <property type="evidence" value="ECO:0007669"/>
    <property type="project" value="UniProtKB-UniRule"/>
</dbReference>
<dbReference type="Gene3D" id="3.10.310.10">
    <property type="entry name" value="Diaminopimelate Epimerase, Chain A, domain 1"/>
    <property type="match status" value="2"/>
</dbReference>
<dbReference type="HAMAP" id="MF_00197">
    <property type="entry name" value="DAP_epimerase"/>
    <property type="match status" value="1"/>
</dbReference>
<dbReference type="InterPro" id="IPR018510">
    <property type="entry name" value="DAP_epimerase_AS"/>
</dbReference>
<dbReference type="InterPro" id="IPR001653">
    <property type="entry name" value="DAP_epimerase_DapF"/>
</dbReference>
<dbReference type="NCBIfam" id="TIGR00652">
    <property type="entry name" value="DapF"/>
    <property type="match status" value="1"/>
</dbReference>
<dbReference type="PANTHER" id="PTHR31689:SF0">
    <property type="entry name" value="DIAMINOPIMELATE EPIMERASE"/>
    <property type="match status" value="1"/>
</dbReference>
<dbReference type="PANTHER" id="PTHR31689">
    <property type="entry name" value="DIAMINOPIMELATE EPIMERASE, CHLOROPLASTIC"/>
    <property type="match status" value="1"/>
</dbReference>
<dbReference type="Pfam" id="PF01678">
    <property type="entry name" value="DAP_epimerase"/>
    <property type="match status" value="2"/>
</dbReference>
<dbReference type="SUPFAM" id="SSF54506">
    <property type="entry name" value="Diaminopimelate epimerase-like"/>
    <property type="match status" value="2"/>
</dbReference>
<dbReference type="PROSITE" id="PS01326">
    <property type="entry name" value="DAP_EPIMERASE"/>
    <property type="match status" value="1"/>
</dbReference>
<reference key="1">
    <citation type="journal article" date="2004" name="Mol. Plant Microbe Interact.">
        <title>The genome sequence of the Gram-positive sugarcane pathogen Leifsonia xyli subsp. xyli.</title>
        <authorList>
            <person name="Monteiro-Vitorello C.B."/>
            <person name="Camargo L.E.A."/>
            <person name="Van Sluys M.A."/>
            <person name="Kitajima J.P."/>
            <person name="Truffi D."/>
            <person name="do Amaral A.M."/>
            <person name="Harakava R."/>
            <person name="de Oliveira J.C.F."/>
            <person name="Wood D."/>
            <person name="de Oliveira M.C."/>
            <person name="Miyaki C.Y."/>
            <person name="Takita M.A."/>
            <person name="da Silva A.C.R."/>
            <person name="Furlan L.R."/>
            <person name="Carraro D.M."/>
            <person name="Camarotte G."/>
            <person name="Almeida N.F. Jr."/>
            <person name="Carrer H."/>
            <person name="Coutinho L.L."/>
            <person name="El-Dorry H.A."/>
            <person name="Ferro M.I.T."/>
            <person name="Gagliardi P.R."/>
            <person name="Giglioti E."/>
            <person name="Goldman M.H.S."/>
            <person name="Goldman G.H."/>
            <person name="Kimura E.T."/>
            <person name="Ferro E.S."/>
            <person name="Kuramae E.E."/>
            <person name="Lemos E.G.M."/>
            <person name="Lemos M.V.F."/>
            <person name="Mauro S.M.Z."/>
            <person name="Machado M.A."/>
            <person name="Marino C.L."/>
            <person name="Menck C.F."/>
            <person name="Nunes L.R."/>
            <person name="Oliveira R.C."/>
            <person name="Pereira G.G."/>
            <person name="Siqueira W."/>
            <person name="de Souza A.A."/>
            <person name="Tsai S.M."/>
            <person name="Zanca A.S."/>
            <person name="Simpson A.J.G."/>
            <person name="Brumbley S.M."/>
            <person name="Setubal J.C."/>
        </authorList>
    </citation>
    <scope>NUCLEOTIDE SEQUENCE [LARGE SCALE GENOMIC DNA]</scope>
    <source>
        <strain>CTCB07</strain>
    </source>
</reference>
<accession>Q6AE05</accession>